<keyword id="KW-0150">Chloroplast</keyword>
<keyword id="KW-0934">Plastid</keyword>
<keyword id="KW-1185">Reference proteome</keyword>
<keyword id="KW-0687">Ribonucleoprotein</keyword>
<keyword id="KW-0689">Ribosomal protein</keyword>
<keyword id="KW-0694">RNA-binding</keyword>
<keyword id="KW-0699">rRNA-binding</keyword>
<organism>
    <name type="scientific">Populus trichocarpa</name>
    <name type="common">Western balsam poplar</name>
    <name type="synonym">Populus balsamifera subsp. trichocarpa</name>
    <dbReference type="NCBI Taxonomy" id="3694"/>
    <lineage>
        <taxon>Eukaryota</taxon>
        <taxon>Viridiplantae</taxon>
        <taxon>Streptophyta</taxon>
        <taxon>Embryophyta</taxon>
        <taxon>Tracheophyta</taxon>
        <taxon>Spermatophyta</taxon>
        <taxon>Magnoliopsida</taxon>
        <taxon>eudicotyledons</taxon>
        <taxon>Gunneridae</taxon>
        <taxon>Pentapetalae</taxon>
        <taxon>rosids</taxon>
        <taxon>fabids</taxon>
        <taxon>Malpighiales</taxon>
        <taxon>Salicaceae</taxon>
        <taxon>Saliceae</taxon>
        <taxon>Populus</taxon>
    </lineage>
</organism>
<evidence type="ECO:0000250" key="1"/>
<evidence type="ECO:0000305" key="2"/>
<comment type="function">
    <text evidence="1">One of the primary rRNA binding proteins, it binds directly to 16S rRNA central domain where it helps coordinate assembly of the platform of the 30S subunit.</text>
</comment>
<comment type="subunit">
    <text evidence="1">Part of the 30S ribosomal subunit.</text>
</comment>
<comment type="subcellular location">
    <subcellularLocation>
        <location>Plastid</location>
        <location>Chloroplast</location>
    </subcellularLocation>
</comment>
<comment type="similarity">
    <text evidence="2">Belongs to the universal ribosomal protein uS8 family.</text>
</comment>
<protein>
    <recommendedName>
        <fullName evidence="2">Small ribosomal subunit protein uS8c</fullName>
    </recommendedName>
    <alternativeName>
        <fullName>30S ribosomal protein S8, chloroplastic</fullName>
    </alternativeName>
</protein>
<proteinExistence type="inferred from homology"/>
<geneLocation type="chloroplast"/>
<accession>A4GYU6</accession>
<gene>
    <name type="primary">rps8</name>
    <name type="ordered locus">Poptr_cp058</name>
</gene>
<reference key="1">
    <citation type="journal article" date="2006" name="Science">
        <title>The genome of black cottonwood, Populus trichocarpa (Torr. &amp; Gray).</title>
        <authorList>
            <person name="Tuskan G.A."/>
            <person name="Difazio S."/>
            <person name="Jansson S."/>
            <person name="Bohlmann J."/>
            <person name="Grigoriev I."/>
            <person name="Hellsten U."/>
            <person name="Putnam N."/>
            <person name="Ralph S."/>
            <person name="Rombauts S."/>
            <person name="Salamov A."/>
            <person name="Schein J."/>
            <person name="Sterck L."/>
            <person name="Aerts A."/>
            <person name="Bhalerao R.R."/>
            <person name="Bhalerao R.P."/>
            <person name="Blaudez D."/>
            <person name="Boerjan W."/>
            <person name="Brun A."/>
            <person name="Brunner A."/>
            <person name="Busov V."/>
            <person name="Campbell M."/>
            <person name="Carlson J."/>
            <person name="Chalot M."/>
            <person name="Chapman J."/>
            <person name="Chen G.-L."/>
            <person name="Cooper D."/>
            <person name="Coutinho P.M."/>
            <person name="Couturier J."/>
            <person name="Covert S."/>
            <person name="Cronk Q."/>
            <person name="Cunningham R."/>
            <person name="Davis J."/>
            <person name="Degroeve S."/>
            <person name="Dejardin A."/>
            <person name="dePamphilis C.W."/>
            <person name="Detter J."/>
            <person name="Dirks B."/>
            <person name="Dubchak I."/>
            <person name="Duplessis S."/>
            <person name="Ehlting J."/>
            <person name="Ellis B."/>
            <person name="Gendler K."/>
            <person name="Goodstein D."/>
            <person name="Gribskov M."/>
            <person name="Grimwood J."/>
            <person name="Groover A."/>
            <person name="Gunter L."/>
            <person name="Hamberger B."/>
            <person name="Heinze B."/>
            <person name="Helariutta Y."/>
            <person name="Henrissat B."/>
            <person name="Holligan D."/>
            <person name="Holt R."/>
            <person name="Huang W."/>
            <person name="Islam-Faridi N."/>
            <person name="Jones S."/>
            <person name="Jones-Rhoades M."/>
            <person name="Jorgensen R."/>
            <person name="Joshi C."/>
            <person name="Kangasjaervi J."/>
            <person name="Karlsson J."/>
            <person name="Kelleher C."/>
            <person name="Kirkpatrick R."/>
            <person name="Kirst M."/>
            <person name="Kohler A."/>
            <person name="Kalluri U."/>
            <person name="Larimer F."/>
            <person name="Leebens-Mack J."/>
            <person name="Leple J.-C."/>
            <person name="Locascio P."/>
            <person name="Lou Y."/>
            <person name="Lucas S."/>
            <person name="Martin F."/>
            <person name="Montanini B."/>
            <person name="Napoli C."/>
            <person name="Nelson D.R."/>
            <person name="Nelson C."/>
            <person name="Nieminen K."/>
            <person name="Nilsson O."/>
            <person name="Pereda V."/>
            <person name="Peter G."/>
            <person name="Philippe R."/>
            <person name="Pilate G."/>
            <person name="Poliakov A."/>
            <person name="Razumovskaya J."/>
            <person name="Richardson P."/>
            <person name="Rinaldi C."/>
            <person name="Ritland K."/>
            <person name="Rouze P."/>
            <person name="Ryaboy D."/>
            <person name="Schmutz J."/>
            <person name="Schrader J."/>
            <person name="Segerman B."/>
            <person name="Shin H."/>
            <person name="Siddiqui A."/>
            <person name="Sterky F."/>
            <person name="Terry A."/>
            <person name="Tsai C.-J."/>
            <person name="Uberbacher E."/>
            <person name="Unneberg P."/>
            <person name="Vahala J."/>
            <person name="Wall K."/>
            <person name="Wessler S."/>
            <person name="Yang G."/>
            <person name="Yin T."/>
            <person name="Douglas C."/>
            <person name="Marra M."/>
            <person name="Sandberg G."/>
            <person name="Van de Peer Y."/>
            <person name="Rokhsar D.S."/>
        </authorList>
    </citation>
    <scope>NUCLEOTIDE SEQUENCE [LARGE SCALE GENOMIC DNA]</scope>
    <source>
        <strain>cv. Nisqually</strain>
    </source>
</reference>
<dbReference type="EMBL" id="EF489041">
    <property type="protein sequence ID" value="ABO36741.1"/>
    <property type="molecule type" value="Genomic_DNA"/>
</dbReference>
<dbReference type="RefSeq" id="YP_001109537.1">
    <property type="nucleotide sequence ID" value="NC_009143.1"/>
</dbReference>
<dbReference type="SMR" id="A4GYU6"/>
<dbReference type="FunCoup" id="A4GYU6">
    <property type="interactions" value="207"/>
</dbReference>
<dbReference type="STRING" id="3694.A4GYU6"/>
<dbReference type="GeneID" id="4929773"/>
<dbReference type="KEGG" id="pop:4929773"/>
<dbReference type="eggNOG" id="KOG1754">
    <property type="taxonomic scope" value="Eukaryota"/>
</dbReference>
<dbReference type="InParanoid" id="A4GYU6"/>
<dbReference type="OrthoDB" id="409928at2759"/>
<dbReference type="Proteomes" id="UP000006729">
    <property type="component" value="Chloroplast"/>
</dbReference>
<dbReference type="ExpressionAtlas" id="A4GYU6">
    <property type="expression patterns" value="baseline and differential"/>
</dbReference>
<dbReference type="GO" id="GO:0009507">
    <property type="term" value="C:chloroplast"/>
    <property type="evidence" value="ECO:0007669"/>
    <property type="project" value="UniProtKB-SubCell"/>
</dbReference>
<dbReference type="GO" id="GO:1990904">
    <property type="term" value="C:ribonucleoprotein complex"/>
    <property type="evidence" value="ECO:0007669"/>
    <property type="project" value="UniProtKB-KW"/>
</dbReference>
<dbReference type="GO" id="GO:0005840">
    <property type="term" value="C:ribosome"/>
    <property type="evidence" value="ECO:0007669"/>
    <property type="project" value="UniProtKB-KW"/>
</dbReference>
<dbReference type="GO" id="GO:0019843">
    <property type="term" value="F:rRNA binding"/>
    <property type="evidence" value="ECO:0007669"/>
    <property type="project" value="UniProtKB-UniRule"/>
</dbReference>
<dbReference type="GO" id="GO:0003735">
    <property type="term" value="F:structural constituent of ribosome"/>
    <property type="evidence" value="ECO:0000318"/>
    <property type="project" value="GO_Central"/>
</dbReference>
<dbReference type="GO" id="GO:0006412">
    <property type="term" value="P:translation"/>
    <property type="evidence" value="ECO:0007669"/>
    <property type="project" value="UniProtKB-UniRule"/>
</dbReference>
<dbReference type="FunFam" id="3.30.1490.10:FF:000001">
    <property type="entry name" value="30S ribosomal protein S8"/>
    <property type="match status" value="1"/>
</dbReference>
<dbReference type="FunFam" id="3.30.1370.30:FF:000004">
    <property type="entry name" value="30S ribosomal protein S8, chloroplastic"/>
    <property type="match status" value="1"/>
</dbReference>
<dbReference type="Gene3D" id="3.30.1370.30">
    <property type="match status" value="1"/>
</dbReference>
<dbReference type="Gene3D" id="3.30.1490.10">
    <property type="match status" value="1"/>
</dbReference>
<dbReference type="HAMAP" id="MF_01302_B">
    <property type="entry name" value="Ribosomal_uS8_B"/>
    <property type="match status" value="1"/>
</dbReference>
<dbReference type="InterPro" id="IPR000630">
    <property type="entry name" value="Ribosomal_uS8"/>
</dbReference>
<dbReference type="InterPro" id="IPR047863">
    <property type="entry name" value="Ribosomal_uS8_CS"/>
</dbReference>
<dbReference type="InterPro" id="IPR035987">
    <property type="entry name" value="Ribosomal_uS8_sf"/>
</dbReference>
<dbReference type="NCBIfam" id="NF001109">
    <property type="entry name" value="PRK00136.1"/>
    <property type="match status" value="1"/>
</dbReference>
<dbReference type="PANTHER" id="PTHR11758">
    <property type="entry name" value="40S RIBOSOMAL PROTEIN S15A"/>
    <property type="match status" value="1"/>
</dbReference>
<dbReference type="Pfam" id="PF00410">
    <property type="entry name" value="Ribosomal_S8"/>
    <property type="match status" value="1"/>
</dbReference>
<dbReference type="SUPFAM" id="SSF56047">
    <property type="entry name" value="Ribosomal protein S8"/>
    <property type="match status" value="1"/>
</dbReference>
<dbReference type="PROSITE" id="PS00053">
    <property type="entry name" value="RIBOSOMAL_S8"/>
    <property type="match status" value="1"/>
</dbReference>
<sequence length="134" mass="15502">MGRDTLADIITSIRNADMDRKGTVRIPSTNITENIIKILLREGFIENVRKHQEGNFFFFALTLRHRRNRKGPCRTSLNLKRISRPGLRIYSNYQQIPRILGGMGIVILSTSRGIMTDREARLERIGGEILCYIW</sequence>
<name>RR8_POPTR</name>
<feature type="chain" id="PRO_0000290991" description="Small ribosomal subunit protein uS8c">
    <location>
        <begin position="1"/>
        <end position="134"/>
    </location>
</feature>